<keyword id="KW-0997">Cell inner membrane</keyword>
<keyword id="KW-1003">Cell membrane</keyword>
<keyword id="KW-0135">Cellulose biosynthesis</keyword>
<keyword id="KW-0472">Membrane</keyword>
<keyword id="KW-1185">Reference proteome</keyword>
<keyword id="KW-0812">Transmembrane</keyword>
<keyword id="KW-1133">Transmembrane helix</keyword>
<protein>
    <recommendedName>
        <fullName>Cellulose biosynthesis protein BcsF</fullName>
    </recommendedName>
</protein>
<gene>
    <name type="primary">bcsF</name>
    <name type="ordered locus">c4349</name>
</gene>
<proteinExistence type="inferred from homology"/>
<evidence type="ECO:0000255" key="1"/>
<evidence type="ECO:0000305" key="2"/>
<sequence>MMTISDIIEIIVVCALIFFPLGYLARHSLRRIRDTLRLFFAKPRYVKPAGTLRRTEKARATKK</sequence>
<accession>P0ADJ6</accession>
<accession>P37658</accession>
<reference key="1">
    <citation type="journal article" date="2002" name="Proc. Natl. Acad. Sci. U.S.A.">
        <title>Extensive mosaic structure revealed by the complete genome sequence of uropathogenic Escherichia coli.</title>
        <authorList>
            <person name="Welch R.A."/>
            <person name="Burland V."/>
            <person name="Plunkett G. III"/>
            <person name="Redford P."/>
            <person name="Roesch P."/>
            <person name="Rasko D."/>
            <person name="Buckles E.L."/>
            <person name="Liou S.-R."/>
            <person name="Boutin A."/>
            <person name="Hackett J."/>
            <person name="Stroud D."/>
            <person name="Mayhew G.F."/>
            <person name="Rose D.J."/>
            <person name="Zhou S."/>
            <person name="Schwartz D.C."/>
            <person name="Perna N.T."/>
            <person name="Mobley H.L.T."/>
            <person name="Donnenberg M.S."/>
            <person name="Blattner F.R."/>
        </authorList>
    </citation>
    <scope>NUCLEOTIDE SEQUENCE [LARGE SCALE GENOMIC DNA]</scope>
    <source>
        <strain>CFT073 / ATCC 700928 / UPEC</strain>
    </source>
</reference>
<comment type="subcellular location">
    <subcellularLocation>
        <location evidence="2">Cell inner membrane</location>
        <topology evidence="2">Single-pass membrane protein</topology>
    </subcellularLocation>
</comment>
<comment type="similarity">
    <text evidence="2">Belongs to the BcsF family.</text>
</comment>
<feature type="chain" id="PRO_0000169583" description="Cellulose biosynthesis protein BcsF">
    <location>
        <begin position="1"/>
        <end position="63"/>
    </location>
</feature>
<feature type="transmembrane region" description="Helical" evidence="1">
    <location>
        <begin position="4"/>
        <end position="24"/>
    </location>
</feature>
<organism>
    <name type="scientific">Escherichia coli O6:H1 (strain CFT073 / ATCC 700928 / UPEC)</name>
    <dbReference type="NCBI Taxonomy" id="199310"/>
    <lineage>
        <taxon>Bacteria</taxon>
        <taxon>Pseudomonadati</taxon>
        <taxon>Pseudomonadota</taxon>
        <taxon>Gammaproteobacteria</taxon>
        <taxon>Enterobacterales</taxon>
        <taxon>Enterobacteriaceae</taxon>
        <taxon>Escherichia</taxon>
    </lineage>
</organism>
<name>BCSF_ECOL6</name>
<dbReference type="EMBL" id="AE014075">
    <property type="protein sequence ID" value="AAN82785.1"/>
    <property type="molecule type" value="Genomic_DNA"/>
</dbReference>
<dbReference type="RefSeq" id="WP_000988308.1">
    <property type="nucleotide sequence ID" value="NZ_CP051263.1"/>
</dbReference>
<dbReference type="SMR" id="P0ADJ6"/>
<dbReference type="STRING" id="199310.c4349"/>
<dbReference type="GeneID" id="93778259"/>
<dbReference type="KEGG" id="ecc:c4349"/>
<dbReference type="eggNOG" id="ENOG5032ZX1">
    <property type="taxonomic scope" value="Bacteria"/>
</dbReference>
<dbReference type="HOGENOM" id="CLU_198346_0_0_6"/>
<dbReference type="BioCyc" id="ECOL199310:C4349-MONOMER"/>
<dbReference type="Proteomes" id="UP000001410">
    <property type="component" value="Chromosome"/>
</dbReference>
<dbReference type="GO" id="GO:0005886">
    <property type="term" value="C:plasma membrane"/>
    <property type="evidence" value="ECO:0007669"/>
    <property type="project" value="UniProtKB-SubCell"/>
</dbReference>
<dbReference type="GO" id="GO:0030244">
    <property type="term" value="P:cellulose biosynthetic process"/>
    <property type="evidence" value="ECO:0007669"/>
    <property type="project" value="UniProtKB-KW"/>
</dbReference>
<dbReference type="InterPro" id="IPR019995">
    <property type="entry name" value="Cellulose_BcsF/YhjT"/>
</dbReference>
<dbReference type="NCBIfam" id="TIGR03493">
    <property type="entry name" value="cellullose_BcsF"/>
    <property type="match status" value="1"/>
</dbReference>
<dbReference type="Pfam" id="PF11120">
    <property type="entry name" value="CBP_BcsF"/>
    <property type="match status" value="1"/>
</dbReference>